<accession>P10072</accession>
<accession>A8MRS7</accession>
<accession>Q6PJD0</accession>
<accession>Q9BSW9</accession>
<accession>Q9UM09</accession>
<evidence type="ECO:0000255" key="1">
    <source>
        <dbReference type="PROSITE-ProRule" id="PRU00042"/>
    </source>
</evidence>
<evidence type="ECO:0000255" key="2">
    <source>
        <dbReference type="PROSITE-ProRule" id="PRU00119"/>
    </source>
</evidence>
<evidence type="ECO:0000256" key="3">
    <source>
        <dbReference type="SAM" id="MobiDB-lite"/>
    </source>
</evidence>
<evidence type="ECO:0000269" key="4">
    <source>
    </source>
</evidence>
<evidence type="ECO:0000269" key="5">
    <source>
    </source>
</evidence>
<evidence type="ECO:0000305" key="6"/>
<evidence type="ECO:0000312" key="7">
    <source>
        <dbReference type="HGNC" id="HGNC:4928"/>
    </source>
</evidence>
<proteinExistence type="evidence at protein level"/>
<keyword id="KW-0025">Alternative splicing</keyword>
<keyword id="KW-0238">DNA-binding</keyword>
<keyword id="KW-0479">Metal-binding</keyword>
<keyword id="KW-0539">Nucleus</keyword>
<keyword id="KW-1267">Proteomics identification</keyword>
<keyword id="KW-1185">Reference proteome</keyword>
<keyword id="KW-0677">Repeat</keyword>
<keyword id="KW-0804">Transcription</keyword>
<keyword id="KW-0805">Transcription regulation</keyword>
<keyword id="KW-0862">Zinc</keyword>
<keyword id="KW-0863">Zinc-finger</keyword>
<feature type="chain" id="PRO_0000047270" description="Zinc finger protein 875">
    <location>
        <begin position="1"/>
        <end position="659"/>
    </location>
</feature>
<feature type="domain" description="KRAB" evidence="2">
    <location>
        <begin position="33"/>
        <end position="104"/>
    </location>
</feature>
<feature type="zinc finger region" description="C2H2-type 1" evidence="1">
    <location>
        <begin position="301"/>
        <end position="323"/>
    </location>
</feature>
<feature type="zinc finger region" description="C2H2-type 2" evidence="1">
    <location>
        <begin position="329"/>
        <end position="351"/>
    </location>
</feature>
<feature type="zinc finger region" description="C2H2-type 3" evidence="1">
    <location>
        <begin position="357"/>
        <end position="379"/>
    </location>
</feature>
<feature type="zinc finger region" description="C2H2-type 4" evidence="1">
    <location>
        <begin position="385"/>
        <end position="407"/>
    </location>
</feature>
<feature type="zinc finger region" description="C2H2-type 5" evidence="1">
    <location>
        <begin position="413"/>
        <end position="435"/>
    </location>
</feature>
<feature type="zinc finger region" description="C2H2-type 6" evidence="1">
    <location>
        <begin position="441"/>
        <end position="463"/>
    </location>
</feature>
<feature type="zinc finger region" description="C2H2-type 7" evidence="1">
    <location>
        <begin position="469"/>
        <end position="491"/>
    </location>
</feature>
<feature type="zinc finger region" description="C2H2-type 8" evidence="1">
    <location>
        <begin position="497"/>
        <end position="519"/>
    </location>
</feature>
<feature type="zinc finger region" description="C2H2-type 9" evidence="1">
    <location>
        <begin position="525"/>
        <end position="547"/>
    </location>
</feature>
<feature type="zinc finger region" description="C2H2-type 10" evidence="1">
    <location>
        <begin position="553"/>
        <end position="575"/>
    </location>
</feature>
<feature type="zinc finger region" description="C2H2-type 11" evidence="1">
    <location>
        <begin position="579"/>
        <end position="601"/>
    </location>
</feature>
<feature type="zinc finger region" description="C2H2-type 12" evidence="1">
    <location>
        <begin position="607"/>
        <end position="629"/>
    </location>
</feature>
<feature type="zinc finger region" description="C2H2-type 13" evidence="1">
    <location>
        <begin position="635"/>
        <end position="657"/>
    </location>
</feature>
<feature type="region of interest" description="Disordered" evidence="3">
    <location>
        <begin position="191"/>
        <end position="229"/>
    </location>
</feature>
<feature type="compositionally biased region" description="Polar residues" evidence="3">
    <location>
        <begin position="191"/>
        <end position="207"/>
    </location>
</feature>
<feature type="splice variant" id="VSP_035755" description="In isoform 2." evidence="6">
    <original>MRVNHTVSTMLPTCMVHRQTMSCSGAGGIT</original>
    <variation>MATGLLRAKKE</variation>
    <location>
        <begin position="1"/>
        <end position="30"/>
    </location>
</feature>
<feature type="sequence variant" id="VAR_047404" description="In dbSNP:rs2921563.">
    <original>R</original>
    <variation>H</variation>
    <location>
        <position position="448"/>
    </location>
</feature>
<feature type="sequence variant" id="VAR_047405" description="In dbSNP:rs3745765." evidence="4 5">
    <original>S</original>
    <variation>I</variation>
    <location>
        <position position="513"/>
    </location>
</feature>
<feature type="sequence variant" id="VAR_047406" description="In dbSNP:rs3745764.">
    <original>T</original>
    <variation>I</variation>
    <location>
        <position position="628"/>
    </location>
</feature>
<organism>
    <name type="scientific">Homo sapiens</name>
    <name type="common">Human</name>
    <dbReference type="NCBI Taxonomy" id="9606"/>
    <lineage>
        <taxon>Eukaryota</taxon>
        <taxon>Metazoa</taxon>
        <taxon>Chordata</taxon>
        <taxon>Craniata</taxon>
        <taxon>Vertebrata</taxon>
        <taxon>Euteleostomi</taxon>
        <taxon>Mammalia</taxon>
        <taxon>Eutheria</taxon>
        <taxon>Euarchontoglires</taxon>
        <taxon>Primates</taxon>
        <taxon>Haplorrhini</taxon>
        <taxon>Catarrhini</taxon>
        <taxon>Hominidae</taxon>
        <taxon>Homo</taxon>
    </lineage>
</organism>
<sequence length="659" mass="75128">MRVNHTVSTMLPTCMVHRQTMSCSGAGGITAFVAFRDVAVYFTQEEWRLLSPAQRTLHREVMLETYNHLVSLEIPSSKPKLIAQLERGEAPWREERKCPLDLCPESKPEIQLSPSCPLIFSSQQALSQHVWLSHLSQLFSSLWAGNPLHLGKHYPEDQKQQQDPFCFSGKAEWIQEGEDSRLLFGRVSKNGTSKALSSPPEEQQPAQSKEDNTVVDIGSSPERRADLEETDKVLHGLEVSGFGEIKYEEFGPGFIKESNLLSLQKTQTGETPYMYTEWGDSFGSMSVLIKNPRTHSGGKPYVCRECGRGFTWKSNLITHQRTHSGEKPYVCKDCGRGFTWKSNLFTHQRTHSGLKPYVCKECGQSFSLKSNLITHQRAHTGEKPYVCRECGRGFRQHSHLVRHKRTHSGEKPYICRECEQGFSQKSHLIRHLRTHTGEKPYVCTECGRHFSWKSNLKTHQRTHSGVKPYVCLECGQCFSLKSNLNKHQRSHTGEKPFVCTECGRGFTRKSTLSTHQRTHSGEKPFVCAECGRGFNDKSTLISHQRTHSGEKPFMCRECGRRFRQKPNLFRHKRAHSGAFVCRECGQGFCAKLTLIKHQRAHAGGKPHVCRECGQGFSRQSHLIRHQRTHSGEKPYICRKCGRGFSRKSNLIRHQRTHSG</sequence>
<dbReference type="EMBL" id="AB013897">
    <property type="protein sequence ID" value="BAA86058.1"/>
    <property type="status" value="ALT_INIT"/>
    <property type="molecule type" value="mRNA"/>
</dbReference>
<dbReference type="EMBL" id="AC016590">
    <property type="status" value="NOT_ANNOTATED_CDS"/>
    <property type="molecule type" value="Genomic_DNA"/>
</dbReference>
<dbReference type="EMBL" id="CH471126">
    <property type="protein sequence ID" value="EAW56722.1"/>
    <property type="molecule type" value="Genomic_DNA"/>
</dbReference>
<dbReference type="EMBL" id="BC004513">
    <property type="protein sequence ID" value="AAH04513.2"/>
    <property type="molecule type" value="mRNA"/>
</dbReference>
<dbReference type="EMBL" id="BC017256">
    <property type="protein sequence ID" value="AAH17256.1"/>
    <property type="molecule type" value="mRNA"/>
</dbReference>
<dbReference type="EMBL" id="M20675">
    <property type="status" value="NOT_ANNOTATED_CDS"/>
    <property type="molecule type" value="Genomic_DNA"/>
</dbReference>
<dbReference type="CCDS" id="CCDS12502.1">
    <molecule id="P10072-1"/>
</dbReference>
<dbReference type="CCDS" id="CCDS82338.1">
    <molecule id="P10072-2"/>
</dbReference>
<dbReference type="PIR" id="C31201">
    <property type="entry name" value="C31201"/>
</dbReference>
<dbReference type="RefSeq" id="NP_001316692.1">
    <molecule id="P10072-2"/>
    <property type="nucleotide sequence ID" value="NM_001329763.2"/>
</dbReference>
<dbReference type="RefSeq" id="NP_001316693.1">
    <molecule id="P10072-2"/>
    <property type="nucleotide sequence ID" value="NM_001329764.2"/>
</dbReference>
<dbReference type="RefSeq" id="NP_001340732.1">
    <molecule id="P10072-2"/>
    <property type="nucleotide sequence ID" value="NM_001353803.2"/>
</dbReference>
<dbReference type="RefSeq" id="NP_861451.1">
    <molecule id="P10072-1"/>
    <property type="nucleotide sequence ID" value="NM_181786.4"/>
</dbReference>
<dbReference type="RefSeq" id="XP_016882167.1">
    <property type="nucleotide sequence ID" value="XM_017026678.1"/>
</dbReference>
<dbReference type="SMR" id="P10072"/>
<dbReference type="BioGRID" id="129883">
    <property type="interactions" value="4"/>
</dbReference>
<dbReference type="FunCoup" id="P10072">
    <property type="interactions" value="35"/>
</dbReference>
<dbReference type="IntAct" id="P10072">
    <property type="interactions" value="1"/>
</dbReference>
<dbReference type="STRING" id="9606.ENSP00000315505"/>
<dbReference type="iPTMnet" id="P10072"/>
<dbReference type="PhosphoSitePlus" id="P10072"/>
<dbReference type="BioMuta" id="HKR1"/>
<dbReference type="DMDM" id="215274257"/>
<dbReference type="jPOST" id="P10072"/>
<dbReference type="MassIVE" id="P10072"/>
<dbReference type="PaxDb" id="9606-ENSP00000315505"/>
<dbReference type="PeptideAtlas" id="P10072"/>
<dbReference type="ProteomicsDB" id="52558">
    <molecule id="P10072-1"/>
</dbReference>
<dbReference type="ProteomicsDB" id="52559">
    <molecule id="P10072-2"/>
</dbReference>
<dbReference type="Antibodypedia" id="29891">
    <property type="antibodies" value="182 antibodies from 24 providers"/>
</dbReference>
<dbReference type="DNASU" id="284459"/>
<dbReference type="Ensembl" id="ENST00000324411.8">
    <molecule id="P10072-1"/>
    <property type="protein sequence ID" value="ENSP00000315505.3"/>
    <property type="gene ID" value="ENSG00000181666.19"/>
</dbReference>
<dbReference type="Ensembl" id="ENST00000392153.8">
    <molecule id="P10072-2"/>
    <property type="protein sequence ID" value="ENSP00000375994.3"/>
    <property type="gene ID" value="ENSG00000181666.19"/>
</dbReference>
<dbReference type="GeneID" id="284459"/>
<dbReference type="KEGG" id="hsa:284459"/>
<dbReference type="MANE-Select" id="ENST00000392153.8">
    <molecule id="P10072-2"/>
    <property type="protein sequence ID" value="ENSP00000375994.3"/>
    <property type="RefSeq nucleotide sequence ID" value="NM_001353803.2"/>
    <property type="RefSeq protein sequence ID" value="NP_001340732.1"/>
</dbReference>
<dbReference type="UCSC" id="uc002ogb.5">
    <molecule id="P10072-1"/>
    <property type="organism name" value="human"/>
</dbReference>
<dbReference type="AGR" id="HGNC:4928"/>
<dbReference type="CTD" id="284459"/>
<dbReference type="DisGeNET" id="284459"/>
<dbReference type="GeneCards" id="ZNF875"/>
<dbReference type="HGNC" id="HGNC:4928">
    <property type="gene designation" value="ZNF875"/>
</dbReference>
<dbReference type="HPA" id="ENSG00000181666">
    <property type="expression patterns" value="Tissue enhanced (retina)"/>
</dbReference>
<dbReference type="MIM" id="165250">
    <property type="type" value="gene"/>
</dbReference>
<dbReference type="neXtProt" id="NX_P10072"/>
<dbReference type="OpenTargets" id="ENSG00000181666"/>
<dbReference type="PharmGKB" id="PA29306"/>
<dbReference type="VEuPathDB" id="HostDB:ENSG00000181666"/>
<dbReference type="eggNOG" id="KOG1721">
    <property type="taxonomic scope" value="Eukaryota"/>
</dbReference>
<dbReference type="GeneTree" id="ENSGT00940000163548"/>
<dbReference type="HOGENOM" id="CLU_002678_44_5_1"/>
<dbReference type="InParanoid" id="P10072"/>
<dbReference type="OMA" id="FGAIKYE"/>
<dbReference type="OrthoDB" id="6591996at2759"/>
<dbReference type="PAN-GO" id="P10072">
    <property type="GO annotations" value="3 GO annotations based on evolutionary models"/>
</dbReference>
<dbReference type="PhylomeDB" id="P10072"/>
<dbReference type="TreeFam" id="TF338096"/>
<dbReference type="PathwayCommons" id="P10072"/>
<dbReference type="Reactome" id="R-HSA-212436">
    <property type="pathway name" value="Generic Transcription Pathway"/>
</dbReference>
<dbReference type="SignaLink" id="P10072"/>
<dbReference type="BioGRID-ORCS" id="284459">
    <property type="hits" value="13 hits in 1176 CRISPR screens"/>
</dbReference>
<dbReference type="ChiTaRS" id="HKR1">
    <property type="organism name" value="human"/>
</dbReference>
<dbReference type="GeneWiki" id="HKR1"/>
<dbReference type="GenomeRNAi" id="284459"/>
<dbReference type="Pharos" id="P10072">
    <property type="development level" value="Tbio"/>
</dbReference>
<dbReference type="PRO" id="PR:P10072"/>
<dbReference type="Proteomes" id="UP000005640">
    <property type="component" value="Chromosome 19"/>
</dbReference>
<dbReference type="RNAct" id="P10072">
    <property type="molecule type" value="protein"/>
</dbReference>
<dbReference type="Bgee" id="ENSG00000181666">
    <property type="expression patterns" value="Expressed in pancreatic ductal cell and 175 other cell types or tissues"/>
</dbReference>
<dbReference type="ExpressionAtlas" id="P10072">
    <property type="expression patterns" value="baseline and differential"/>
</dbReference>
<dbReference type="GO" id="GO:0005634">
    <property type="term" value="C:nucleus"/>
    <property type="evidence" value="ECO:0000318"/>
    <property type="project" value="GO_Central"/>
</dbReference>
<dbReference type="GO" id="GO:0000981">
    <property type="term" value="F:DNA-binding transcription factor activity, RNA polymerase II-specific"/>
    <property type="evidence" value="ECO:0000318"/>
    <property type="project" value="GO_Central"/>
</dbReference>
<dbReference type="GO" id="GO:0000977">
    <property type="term" value="F:RNA polymerase II transcription regulatory region sequence-specific DNA binding"/>
    <property type="evidence" value="ECO:0000318"/>
    <property type="project" value="GO_Central"/>
</dbReference>
<dbReference type="GO" id="GO:0008270">
    <property type="term" value="F:zinc ion binding"/>
    <property type="evidence" value="ECO:0007669"/>
    <property type="project" value="UniProtKB-KW"/>
</dbReference>
<dbReference type="GO" id="GO:0006357">
    <property type="term" value="P:regulation of transcription by RNA polymerase II"/>
    <property type="evidence" value="ECO:0000318"/>
    <property type="project" value="GO_Central"/>
</dbReference>
<dbReference type="CDD" id="cd07765">
    <property type="entry name" value="KRAB_A-box"/>
    <property type="match status" value="1"/>
</dbReference>
<dbReference type="FunFam" id="3.30.160.60:FF:000601">
    <property type="entry name" value="Histone-lysine N-methyltransferase PRDM9"/>
    <property type="match status" value="1"/>
</dbReference>
<dbReference type="FunFam" id="3.30.160.60:FF:001312">
    <property type="entry name" value="Histone-lysine N-methyltransferase PRDM9"/>
    <property type="match status" value="1"/>
</dbReference>
<dbReference type="FunFam" id="3.30.160.60:FF:001576">
    <property type="entry name" value="HKR1, GLI-Kruppel zinc finger family member"/>
    <property type="match status" value="1"/>
</dbReference>
<dbReference type="FunFam" id="3.30.160.60:FF:000155">
    <property type="entry name" value="zinc finger protein 133 isoform X1"/>
    <property type="match status" value="6"/>
</dbReference>
<dbReference type="FunFam" id="3.30.160.60:FF:002343">
    <property type="entry name" value="Zinc finger protein 33A"/>
    <property type="match status" value="3"/>
</dbReference>
<dbReference type="FunFam" id="3.30.160.60:FF:000011">
    <property type="entry name" value="zinc finger protein 615 isoform X1"/>
    <property type="match status" value="1"/>
</dbReference>
<dbReference type="Gene3D" id="6.10.140.140">
    <property type="match status" value="1"/>
</dbReference>
<dbReference type="Gene3D" id="3.30.160.60">
    <property type="entry name" value="Classic Zinc Finger"/>
    <property type="match status" value="15"/>
</dbReference>
<dbReference type="InterPro" id="IPR001909">
    <property type="entry name" value="KRAB"/>
</dbReference>
<dbReference type="InterPro" id="IPR036051">
    <property type="entry name" value="KRAB_dom_sf"/>
</dbReference>
<dbReference type="InterPro" id="IPR048414">
    <property type="entry name" value="PDRM9-like_Znf-C2H2"/>
</dbReference>
<dbReference type="InterPro" id="IPR036236">
    <property type="entry name" value="Znf_C2H2_sf"/>
</dbReference>
<dbReference type="InterPro" id="IPR013087">
    <property type="entry name" value="Znf_C2H2_type"/>
</dbReference>
<dbReference type="PANTHER" id="PTHR23235:SF178">
    <property type="entry name" value="C2H2-TYPE DOMAIN-CONTAINING PROTEIN-RELATED"/>
    <property type="match status" value="1"/>
</dbReference>
<dbReference type="PANTHER" id="PTHR23235">
    <property type="entry name" value="KRUEPPEL-LIKE TRANSCRIPTION FACTOR"/>
    <property type="match status" value="1"/>
</dbReference>
<dbReference type="Pfam" id="PF01352">
    <property type="entry name" value="KRAB"/>
    <property type="match status" value="1"/>
</dbReference>
<dbReference type="Pfam" id="PF00096">
    <property type="entry name" value="zf-C2H2"/>
    <property type="match status" value="12"/>
</dbReference>
<dbReference type="Pfam" id="PF21225">
    <property type="entry name" value="zf-C2H2_5"/>
    <property type="match status" value="1"/>
</dbReference>
<dbReference type="SMART" id="SM00349">
    <property type="entry name" value="KRAB"/>
    <property type="match status" value="1"/>
</dbReference>
<dbReference type="SMART" id="SM00355">
    <property type="entry name" value="ZnF_C2H2"/>
    <property type="match status" value="13"/>
</dbReference>
<dbReference type="SUPFAM" id="SSF57667">
    <property type="entry name" value="beta-beta-alpha zinc fingers"/>
    <property type="match status" value="8"/>
</dbReference>
<dbReference type="SUPFAM" id="SSF109640">
    <property type="entry name" value="KRAB domain (Kruppel-associated box)"/>
    <property type="match status" value="1"/>
</dbReference>
<dbReference type="PROSITE" id="PS50805">
    <property type="entry name" value="KRAB"/>
    <property type="match status" value="1"/>
</dbReference>
<dbReference type="PROSITE" id="PS00028">
    <property type="entry name" value="ZINC_FINGER_C2H2_1"/>
    <property type="match status" value="13"/>
</dbReference>
<dbReference type="PROSITE" id="PS50157">
    <property type="entry name" value="ZINC_FINGER_C2H2_2"/>
    <property type="match status" value="13"/>
</dbReference>
<reference key="1">
    <citation type="journal article" date="1998" name="Gene">
        <title>The Kruppel-type zinc finger family gene, HKR1, is induced in lung cancer by exposure to platinum drugs.</title>
        <authorList>
            <person name="Oguri T."/>
            <person name="Katoh O."/>
            <person name="Takahashi T."/>
            <person name="Isobe T."/>
            <person name="Kuramoto K."/>
            <person name="Hirata S."/>
            <person name="Yamakido M."/>
            <person name="Watanabe H."/>
        </authorList>
    </citation>
    <scope>NUCLEOTIDE SEQUENCE [MRNA] (ISOFORM 1)</scope>
    <scope>VARIANT ILE-513</scope>
</reference>
<reference key="2">
    <citation type="journal article" date="2004" name="Nature">
        <title>The DNA sequence and biology of human chromosome 19.</title>
        <authorList>
            <person name="Grimwood J."/>
            <person name="Gordon L.A."/>
            <person name="Olsen A.S."/>
            <person name="Terry A."/>
            <person name="Schmutz J."/>
            <person name="Lamerdin J.E."/>
            <person name="Hellsten U."/>
            <person name="Goodstein D."/>
            <person name="Couronne O."/>
            <person name="Tran-Gyamfi M."/>
            <person name="Aerts A."/>
            <person name="Altherr M."/>
            <person name="Ashworth L."/>
            <person name="Bajorek E."/>
            <person name="Black S."/>
            <person name="Branscomb E."/>
            <person name="Caenepeel S."/>
            <person name="Carrano A.V."/>
            <person name="Caoile C."/>
            <person name="Chan Y.M."/>
            <person name="Christensen M."/>
            <person name="Cleland C.A."/>
            <person name="Copeland A."/>
            <person name="Dalin E."/>
            <person name="Dehal P."/>
            <person name="Denys M."/>
            <person name="Detter J.C."/>
            <person name="Escobar J."/>
            <person name="Flowers D."/>
            <person name="Fotopulos D."/>
            <person name="Garcia C."/>
            <person name="Georgescu A.M."/>
            <person name="Glavina T."/>
            <person name="Gomez M."/>
            <person name="Gonzales E."/>
            <person name="Groza M."/>
            <person name="Hammon N."/>
            <person name="Hawkins T."/>
            <person name="Haydu L."/>
            <person name="Ho I."/>
            <person name="Huang W."/>
            <person name="Israni S."/>
            <person name="Jett J."/>
            <person name="Kadner K."/>
            <person name="Kimball H."/>
            <person name="Kobayashi A."/>
            <person name="Larionov V."/>
            <person name="Leem S.-H."/>
            <person name="Lopez F."/>
            <person name="Lou Y."/>
            <person name="Lowry S."/>
            <person name="Malfatti S."/>
            <person name="Martinez D."/>
            <person name="McCready P.M."/>
            <person name="Medina C."/>
            <person name="Morgan J."/>
            <person name="Nelson K."/>
            <person name="Nolan M."/>
            <person name="Ovcharenko I."/>
            <person name="Pitluck S."/>
            <person name="Pollard M."/>
            <person name="Popkie A.P."/>
            <person name="Predki P."/>
            <person name="Quan G."/>
            <person name="Ramirez L."/>
            <person name="Rash S."/>
            <person name="Retterer J."/>
            <person name="Rodriguez A."/>
            <person name="Rogers S."/>
            <person name="Salamov A."/>
            <person name="Salazar A."/>
            <person name="She X."/>
            <person name="Smith D."/>
            <person name="Slezak T."/>
            <person name="Solovyev V."/>
            <person name="Thayer N."/>
            <person name="Tice H."/>
            <person name="Tsai M."/>
            <person name="Ustaszewska A."/>
            <person name="Vo N."/>
            <person name="Wagner M."/>
            <person name="Wheeler J."/>
            <person name="Wu K."/>
            <person name="Xie G."/>
            <person name="Yang J."/>
            <person name="Dubchak I."/>
            <person name="Furey T.S."/>
            <person name="DeJong P."/>
            <person name="Dickson M."/>
            <person name="Gordon D."/>
            <person name="Eichler E.E."/>
            <person name="Pennacchio L.A."/>
            <person name="Richardson P."/>
            <person name="Stubbs L."/>
            <person name="Rokhsar D.S."/>
            <person name="Myers R.M."/>
            <person name="Rubin E.M."/>
            <person name="Lucas S.M."/>
        </authorList>
    </citation>
    <scope>NUCLEOTIDE SEQUENCE [LARGE SCALE GENOMIC DNA]</scope>
</reference>
<reference key="3">
    <citation type="submission" date="2005-07" db="EMBL/GenBank/DDBJ databases">
        <authorList>
            <person name="Mural R.J."/>
            <person name="Istrail S."/>
            <person name="Sutton G.G."/>
            <person name="Florea L."/>
            <person name="Halpern A.L."/>
            <person name="Mobarry C.M."/>
            <person name="Lippert R."/>
            <person name="Walenz B."/>
            <person name="Shatkay H."/>
            <person name="Dew I."/>
            <person name="Miller J.R."/>
            <person name="Flanigan M.J."/>
            <person name="Edwards N.J."/>
            <person name="Bolanos R."/>
            <person name="Fasulo D."/>
            <person name="Halldorsson B.V."/>
            <person name="Hannenhalli S."/>
            <person name="Turner R."/>
            <person name="Yooseph S."/>
            <person name="Lu F."/>
            <person name="Nusskern D.R."/>
            <person name="Shue B.C."/>
            <person name="Zheng X.H."/>
            <person name="Zhong F."/>
            <person name="Delcher A.L."/>
            <person name="Huson D.H."/>
            <person name="Kravitz S.A."/>
            <person name="Mouchard L."/>
            <person name="Reinert K."/>
            <person name="Remington K.A."/>
            <person name="Clark A.G."/>
            <person name="Waterman M.S."/>
            <person name="Eichler E.E."/>
            <person name="Adams M.D."/>
            <person name="Hunkapiller M.W."/>
            <person name="Myers E.W."/>
            <person name="Venter J.C."/>
        </authorList>
    </citation>
    <scope>NUCLEOTIDE SEQUENCE [LARGE SCALE GENOMIC DNA]</scope>
</reference>
<reference key="4">
    <citation type="journal article" date="2004" name="Genome Res.">
        <title>The status, quality, and expansion of the NIH full-length cDNA project: the Mammalian Gene Collection (MGC).</title>
        <authorList>
            <consortium name="The MGC Project Team"/>
        </authorList>
    </citation>
    <scope>NUCLEOTIDE SEQUENCE [LARGE SCALE MRNA] (ISOFORM 1)</scope>
    <scope>VARIANT ILE-513</scope>
    <source>
        <tissue>Ovary</tissue>
    </source>
</reference>
<reference key="5">
    <citation type="journal article" date="1988" name="Mol. Cell. Biol.">
        <title>The GLI-Kruppel family of human genes.</title>
        <authorList>
            <person name="Ruppert J.M."/>
            <person name="Kinzler K.W."/>
            <person name="Wong A.J."/>
            <person name="Bigner S.H."/>
            <person name="Kao F.T."/>
            <person name="Law M.L."/>
            <person name="Seuanez H.N."/>
            <person name="O'Brien S.J."/>
            <person name="Vogelstein B."/>
        </authorList>
    </citation>
    <scope>NUCLEOTIDE SEQUENCE [GENOMIC DNA] OF 276-499</scope>
</reference>
<gene>
    <name evidence="7" type="primary">ZNF875</name>
    <name evidence="7" type="synonym">HKR1</name>
</gene>
<protein>
    <recommendedName>
        <fullName evidence="6">Zinc finger protein 875</fullName>
    </recommendedName>
    <alternativeName>
        <fullName>Krueppel-related zinc finger protein 1</fullName>
    </alternativeName>
    <alternativeName>
        <fullName>Protein HKR1</fullName>
    </alternativeName>
</protein>
<comment type="function">
    <text>May be involved in transcriptional regulation.</text>
</comment>
<comment type="subcellular location">
    <subcellularLocation>
        <location evidence="6">Nucleus</location>
    </subcellularLocation>
</comment>
<comment type="alternative products">
    <event type="alternative splicing"/>
    <isoform>
        <id>P10072-1</id>
        <name>1</name>
        <sequence type="displayed"/>
    </isoform>
    <isoform>
        <id>P10072-2</id>
        <name>2</name>
        <sequence type="described" ref="VSP_035755"/>
    </isoform>
</comment>
<comment type="similarity">
    <text evidence="6">Belongs to the krueppel C2H2-type zinc-finger protein family.</text>
</comment>
<comment type="sequence caution" evidence="6">
    <conflict type="erroneous initiation">
        <sequence resource="EMBL-CDS" id="BAA86058"/>
    </conflict>
    <text>Extended N-terminus.</text>
</comment>
<name>ZN875_HUMAN</name>